<sequence>MVVEDSMKATSAEDLSNSIANQNPRGRGGDEDEELEEGEIVGDDDLDSSNLSASLVHQPHPLEHSWTFWFDNPSAKSKQATWGASIRPIYTFSTVEEFWSVYNNIHHPSKLAMRADLYCFKHKIEPKWEDPVCANGGKWTVNFPRGKSDNGWLYTLLAMIGEQFDCGDEICGAVVNVRSGQDKISIWTKNASNEAAQASIGKQWKEFLDYNESIGFIFHDDAKKFDRHAKNKYMV</sequence>
<gene>
    <name evidence="5" type="primary">eIF4E</name>
    <name evidence="6" type="ORF">E6C27_scaffold96G002720</name>
</gene>
<name>IF4E1_CUCMM</name>
<accession>P0DXI5</accession>
<accession>A0A5A7UUA1</accession>
<accession>Q00LS8</accession>
<accession>Q00LT0</accession>
<evidence type="ECO:0000250" key="1">
    <source>
        <dbReference type="UniProtKB" id="C6ZJZ3"/>
    </source>
</evidence>
<evidence type="ECO:0000250" key="2">
    <source>
        <dbReference type="UniProtKB" id="P0DXI0"/>
    </source>
</evidence>
<evidence type="ECO:0000250" key="3">
    <source>
        <dbReference type="UniProtKB" id="P29557"/>
    </source>
</evidence>
<evidence type="ECO:0000256" key="4">
    <source>
        <dbReference type="SAM" id="MobiDB-lite"/>
    </source>
</evidence>
<evidence type="ECO:0000305" key="5"/>
<evidence type="ECO:0000312" key="6">
    <source>
        <dbReference type="EMBL" id="KAA0057081.1"/>
    </source>
</evidence>
<organism>
    <name type="scientific">Cucumis melo var. makuwa</name>
    <name type="common">Oriental melon</name>
    <dbReference type="NCBI Taxonomy" id="1194695"/>
    <lineage>
        <taxon>Eukaryota</taxon>
        <taxon>Viridiplantae</taxon>
        <taxon>Streptophyta</taxon>
        <taxon>Embryophyta</taxon>
        <taxon>Tracheophyta</taxon>
        <taxon>Spermatophyta</taxon>
        <taxon>Magnoliopsida</taxon>
        <taxon>eudicotyledons</taxon>
        <taxon>Gunneridae</taxon>
        <taxon>Pentapetalae</taxon>
        <taxon>rosids</taxon>
        <taxon>fabids</taxon>
        <taxon>Cucurbitales</taxon>
        <taxon>Cucurbitaceae</taxon>
        <taxon>Benincaseae</taxon>
        <taxon>Cucumis</taxon>
    </lineage>
</organism>
<protein>
    <recommendedName>
        <fullName evidence="5">Eukaryotic translation initiation factor 4E-1</fullName>
        <shortName evidence="5">Cm-eIF4E</shortName>
        <shortName evidence="5">eIF-4E-1</shortName>
        <shortName evidence="5">eIF4E-1</shortName>
    </recommendedName>
    <alternativeName>
        <fullName evidence="5">eIF-4F 25 kDa subunit</fullName>
    </alternativeName>
    <alternativeName>
        <fullName evidence="5">eIF-4F p26 subunit</fullName>
    </alternativeName>
    <alternativeName>
        <fullName evidence="5">mRNA cap-binding protein</fullName>
    </alternativeName>
</protein>
<keyword id="KW-0963">Cytoplasm</keyword>
<keyword id="KW-1015">Disulfide bond</keyword>
<keyword id="KW-0945">Host-virus interaction</keyword>
<keyword id="KW-0396">Initiation factor</keyword>
<keyword id="KW-0539">Nucleus</keyword>
<keyword id="KW-0611">Plant defense</keyword>
<keyword id="KW-0648">Protein biosynthesis</keyword>
<keyword id="KW-1185">Reference proteome</keyword>
<keyword id="KW-0694">RNA-binding</keyword>
<keyword id="KW-0810">Translation regulation</keyword>
<comment type="function">
    <text evidence="2">Component of the protein complex eIF4F, which is involved in the recognition of the mRNA cap, ATP-dependent unwinding of 5'-terminal secondary structure and recruitment of mRNA to the ribosome (By similarity). Recognizes and binds the 7-methylguanosine-containing mRNA cap during an early step in the initiation of protein synthesis and facilitates ribosome binding by inducing the unwinding of the mRNAs secondary structures (By similarity). Key component of recessive resistance to potyviruses and Tombusviridae genus Carmovirus such as melon necrotic spot virus (MNSV) (By similarity).</text>
</comment>
<comment type="function">
    <text evidence="2">(Microbial infection) Susceptibility host factor required for viral infection by recruiting viral RNAs, including uncapped and non-polyadenylated RNA, to the host ribosomal complex via an interaction with viral genome-linked protein (VPg).</text>
</comment>
<comment type="subunit">
    <text evidence="2 3">EIF4F is a multi-subunit complex, the composition of which varies with external and internal environmental conditions (By similarity). It is composed of at least EIF4A, EIF4E and EIF4G (By similarity). EIF4E is also known to interact with other partners (By similarity). Interacts directly with eIF4G (By similarity). In higher plants two isoforms of EIF4F have been identified, named isoform EIF4F and isoform EIF(iso)4F (By similarity). Isoform EIF4F has subunits p220 and p26, whereas isoform EIF(iso)4F has subunits p82 and p28 (By similarity).</text>
</comment>
<comment type="subunit">
    <text evidence="2">(Microbial infection) Interacts with potyvirus viral genome-linked protein (VPg); this interaction is possible in susceptible hosts but impaired in resistant plants.</text>
</comment>
<comment type="subcellular location">
    <subcellularLocation>
        <location evidence="1">Nucleus</location>
    </subcellularLocation>
    <subcellularLocation>
        <location evidence="1">Cytoplasm</location>
    </subcellularLocation>
</comment>
<comment type="PTM">
    <text evidence="3">According to the redox status, the Cys-133-Cys-171 disulfide bridge may have a role in regulating protein function by affecting its ability to bind capped mRNA.</text>
</comment>
<comment type="similarity">
    <text evidence="5">Belongs to the eukaryotic initiation factor 4E family.</text>
</comment>
<proteinExistence type="inferred from homology"/>
<reference key="1">
    <citation type="submission" date="2019-08" db="EMBL/GenBank/DDBJ databases">
        <title>Draft genome sequences of two oriental melons (Cucumis melo L. var makuwa).</title>
        <authorList>
            <person name="Kwon S.-Y."/>
        </authorList>
    </citation>
    <scope>NUCLEOTIDE SEQUENCE [LARGE SCALE GENOMIC DNA]</scope>
    <source>
        <strain>cv. SW 3</strain>
        <tissue>Leaf</tissue>
    </source>
</reference>
<dbReference type="EMBL" id="SSTE01007279">
    <property type="protein sequence ID" value="KAA0057081.1"/>
    <property type="molecule type" value="Genomic_DNA"/>
</dbReference>
<dbReference type="SMR" id="P0DXI5"/>
<dbReference type="STRING" id="1194695.A0A5A7UUA1"/>
<dbReference type="Proteomes" id="UP000321393">
    <property type="component" value="Unassembled WGS sequence"/>
</dbReference>
<dbReference type="GO" id="GO:0005737">
    <property type="term" value="C:cytoplasm"/>
    <property type="evidence" value="ECO:0000250"/>
    <property type="project" value="UniProtKB"/>
</dbReference>
<dbReference type="GO" id="GO:0016281">
    <property type="term" value="C:eukaryotic translation initiation factor 4F complex"/>
    <property type="evidence" value="ECO:0007669"/>
    <property type="project" value="TreeGrafter"/>
</dbReference>
<dbReference type="GO" id="GO:0005634">
    <property type="term" value="C:nucleus"/>
    <property type="evidence" value="ECO:0000250"/>
    <property type="project" value="UniProtKB"/>
</dbReference>
<dbReference type="GO" id="GO:0000340">
    <property type="term" value="F:RNA 7-methylguanosine cap binding"/>
    <property type="evidence" value="ECO:0007669"/>
    <property type="project" value="TreeGrafter"/>
</dbReference>
<dbReference type="GO" id="GO:0003723">
    <property type="term" value="F:RNA binding"/>
    <property type="evidence" value="ECO:0000250"/>
    <property type="project" value="UniProtKB"/>
</dbReference>
<dbReference type="GO" id="GO:0003743">
    <property type="term" value="F:translation initiation factor activity"/>
    <property type="evidence" value="ECO:0000250"/>
    <property type="project" value="UniProtKB"/>
</dbReference>
<dbReference type="GO" id="GO:0051607">
    <property type="term" value="P:defense response to virus"/>
    <property type="evidence" value="ECO:0000250"/>
    <property type="project" value="UniProtKB"/>
</dbReference>
<dbReference type="GO" id="GO:0006417">
    <property type="term" value="P:regulation of translation"/>
    <property type="evidence" value="ECO:0007669"/>
    <property type="project" value="UniProtKB-KW"/>
</dbReference>
<dbReference type="GO" id="GO:0006413">
    <property type="term" value="P:translational initiation"/>
    <property type="evidence" value="ECO:0000250"/>
    <property type="project" value="UniProtKB"/>
</dbReference>
<dbReference type="FunFam" id="3.30.760.10:FF:000003">
    <property type="entry name" value="Eukaryotic translation initiation factor 4E"/>
    <property type="match status" value="1"/>
</dbReference>
<dbReference type="Gene3D" id="3.30.760.10">
    <property type="entry name" value="RNA Cap, Translation Initiation Factor Eif4e"/>
    <property type="match status" value="1"/>
</dbReference>
<dbReference type="InterPro" id="IPR023398">
    <property type="entry name" value="TIF_eIF4e-like"/>
</dbReference>
<dbReference type="InterPro" id="IPR001040">
    <property type="entry name" value="TIF_eIF_4E"/>
</dbReference>
<dbReference type="InterPro" id="IPR019770">
    <property type="entry name" value="TIF_eIF_4E_CS"/>
</dbReference>
<dbReference type="PANTHER" id="PTHR11960">
    <property type="entry name" value="EUKARYOTIC TRANSLATION INITIATION FACTOR 4E RELATED"/>
    <property type="match status" value="1"/>
</dbReference>
<dbReference type="PANTHER" id="PTHR11960:SF8">
    <property type="entry name" value="EUKARYOTIC TRANSLATION INITIATION FACTOR 4E1-RELATED"/>
    <property type="match status" value="1"/>
</dbReference>
<dbReference type="Pfam" id="PF01652">
    <property type="entry name" value="IF4E"/>
    <property type="match status" value="1"/>
</dbReference>
<dbReference type="SUPFAM" id="SSF55418">
    <property type="entry name" value="eIF4e-like"/>
    <property type="match status" value="1"/>
</dbReference>
<dbReference type="PROSITE" id="PS00813">
    <property type="entry name" value="IF4E"/>
    <property type="match status" value="1"/>
</dbReference>
<feature type="chain" id="PRO_0000461288" description="Eukaryotic translation initiation factor 4E-1">
    <location>
        <begin position="1"/>
        <end position="235"/>
    </location>
</feature>
<feature type="region of interest" description="Disordered" evidence="4">
    <location>
        <begin position="1"/>
        <end position="52"/>
    </location>
</feature>
<feature type="region of interest" description="EIF4G-binding" evidence="2">
    <location>
        <begin position="60"/>
        <end position="63"/>
    </location>
</feature>
<feature type="region of interest" description="EIF4G-binding" evidence="2">
    <location>
        <begin position="70"/>
        <end position="106"/>
    </location>
</feature>
<feature type="region of interest" description="EIF4G-binding" evidence="2">
    <location>
        <begin position="154"/>
        <end position="163"/>
    </location>
</feature>
<feature type="compositionally biased region" description="Polar residues" evidence="4">
    <location>
        <begin position="13"/>
        <end position="24"/>
    </location>
</feature>
<feature type="compositionally biased region" description="Acidic residues" evidence="4">
    <location>
        <begin position="30"/>
        <end position="47"/>
    </location>
</feature>
<feature type="binding site" evidence="2">
    <location>
        <begin position="78"/>
        <end position="83"/>
    </location>
    <ligand>
        <name>mRNA</name>
        <dbReference type="ChEBI" id="CHEBI:33699"/>
    </ligand>
    <ligandPart>
        <name>N(7)-methylguanosine 5'-triphosphate group</name>
        <dbReference type="ChEBI" id="CHEBI:74429"/>
        <note>m7GTP residue in mRNA cap</note>
    </ligandPart>
</feature>
<feature type="binding site" evidence="2">
    <location>
        <position position="110"/>
    </location>
    <ligand>
        <name>mRNA</name>
        <dbReference type="ChEBI" id="CHEBI:33699"/>
    </ligand>
    <ligandPart>
        <name>N(7)-methylguanosine 5'-triphosphate group</name>
        <dbReference type="ChEBI" id="CHEBI:74429"/>
        <note>m7GTP residue in mRNA cap</note>
    </ligandPart>
</feature>
<feature type="binding site" evidence="2">
    <location>
        <begin position="128"/>
        <end position="129"/>
    </location>
    <ligand>
        <name>mRNA</name>
        <dbReference type="ChEBI" id="CHEBI:33699"/>
    </ligand>
    <ligandPart>
        <name>N(7)-methylguanosine 5'-triphosphate group</name>
        <dbReference type="ChEBI" id="CHEBI:74429"/>
        <note>m7GTP residue in mRNA cap</note>
    </ligandPart>
</feature>
<feature type="binding site" evidence="2">
    <location>
        <begin position="178"/>
        <end position="183"/>
    </location>
    <ligand>
        <name>mRNA</name>
        <dbReference type="ChEBI" id="CHEBI:33699"/>
    </ligand>
    <ligandPart>
        <name>N(7)-methylguanosine 5'-triphosphate group</name>
        <dbReference type="ChEBI" id="CHEBI:74429"/>
        <note>m7GTP residue in mRNA cap</note>
    </ligandPart>
</feature>
<feature type="binding site" evidence="2">
    <location>
        <begin position="223"/>
        <end position="227"/>
    </location>
    <ligand>
        <name>mRNA</name>
        <dbReference type="ChEBI" id="CHEBI:33699"/>
    </ligand>
    <ligandPart>
        <name>N(7)-methylguanosine 5'-triphosphate group</name>
        <dbReference type="ChEBI" id="CHEBI:74429"/>
        <note>m7GTP residue in mRNA cap</note>
    </ligandPart>
</feature>
<feature type="disulfide bond" evidence="2">
    <location>
        <begin position="133"/>
        <end position="171"/>
    </location>
</feature>